<feature type="chain" id="PRO_0000355845" description="Large ribosomal subunit protein uL14">
    <location>
        <begin position="1"/>
        <end position="123"/>
    </location>
</feature>
<accession>Q5NQ55</accession>
<comment type="function">
    <text evidence="1">Binds to 23S rRNA. Forms part of two intersubunit bridges in the 70S ribosome.</text>
</comment>
<comment type="subunit">
    <text evidence="1">Part of the 50S ribosomal subunit. Forms a cluster with proteins L3 and L19. In the 70S ribosome, L14 and L19 interact and together make contacts with the 16S rRNA in bridges B5 and B8.</text>
</comment>
<comment type="similarity">
    <text evidence="1">Belongs to the universal ribosomal protein uL14 family.</text>
</comment>
<dbReference type="EMBL" id="AE008692">
    <property type="protein sequence ID" value="AAV89150.2"/>
    <property type="molecule type" value="Genomic_DNA"/>
</dbReference>
<dbReference type="RefSeq" id="WP_011240433.1">
    <property type="nucleotide sequence ID" value="NZ_CP035711.1"/>
</dbReference>
<dbReference type="SMR" id="Q5NQ55"/>
<dbReference type="STRING" id="264203.ZMO0526"/>
<dbReference type="GeneID" id="79904282"/>
<dbReference type="KEGG" id="zmo:ZMO0526"/>
<dbReference type="eggNOG" id="COG0093">
    <property type="taxonomic scope" value="Bacteria"/>
</dbReference>
<dbReference type="HOGENOM" id="CLU_095071_2_1_5"/>
<dbReference type="Proteomes" id="UP000001173">
    <property type="component" value="Chromosome"/>
</dbReference>
<dbReference type="GO" id="GO:0022625">
    <property type="term" value="C:cytosolic large ribosomal subunit"/>
    <property type="evidence" value="ECO:0007669"/>
    <property type="project" value="TreeGrafter"/>
</dbReference>
<dbReference type="GO" id="GO:0070180">
    <property type="term" value="F:large ribosomal subunit rRNA binding"/>
    <property type="evidence" value="ECO:0007669"/>
    <property type="project" value="TreeGrafter"/>
</dbReference>
<dbReference type="GO" id="GO:0003735">
    <property type="term" value="F:structural constituent of ribosome"/>
    <property type="evidence" value="ECO:0007669"/>
    <property type="project" value="InterPro"/>
</dbReference>
<dbReference type="GO" id="GO:0006412">
    <property type="term" value="P:translation"/>
    <property type="evidence" value="ECO:0007669"/>
    <property type="project" value="UniProtKB-UniRule"/>
</dbReference>
<dbReference type="CDD" id="cd00337">
    <property type="entry name" value="Ribosomal_uL14"/>
    <property type="match status" value="1"/>
</dbReference>
<dbReference type="FunFam" id="2.40.150.20:FF:000001">
    <property type="entry name" value="50S ribosomal protein L14"/>
    <property type="match status" value="1"/>
</dbReference>
<dbReference type="Gene3D" id="2.40.150.20">
    <property type="entry name" value="Ribosomal protein L14"/>
    <property type="match status" value="1"/>
</dbReference>
<dbReference type="HAMAP" id="MF_01367">
    <property type="entry name" value="Ribosomal_uL14"/>
    <property type="match status" value="1"/>
</dbReference>
<dbReference type="InterPro" id="IPR000218">
    <property type="entry name" value="Ribosomal_uL14"/>
</dbReference>
<dbReference type="InterPro" id="IPR005745">
    <property type="entry name" value="Ribosomal_uL14_bac-type"/>
</dbReference>
<dbReference type="InterPro" id="IPR019972">
    <property type="entry name" value="Ribosomal_uL14_CS"/>
</dbReference>
<dbReference type="InterPro" id="IPR036853">
    <property type="entry name" value="Ribosomal_uL14_sf"/>
</dbReference>
<dbReference type="NCBIfam" id="TIGR01067">
    <property type="entry name" value="rplN_bact"/>
    <property type="match status" value="1"/>
</dbReference>
<dbReference type="PANTHER" id="PTHR11761">
    <property type="entry name" value="50S/60S RIBOSOMAL PROTEIN L14/L23"/>
    <property type="match status" value="1"/>
</dbReference>
<dbReference type="PANTHER" id="PTHR11761:SF3">
    <property type="entry name" value="LARGE RIBOSOMAL SUBUNIT PROTEIN UL14M"/>
    <property type="match status" value="1"/>
</dbReference>
<dbReference type="Pfam" id="PF00238">
    <property type="entry name" value="Ribosomal_L14"/>
    <property type="match status" value="1"/>
</dbReference>
<dbReference type="SMART" id="SM01374">
    <property type="entry name" value="Ribosomal_L14"/>
    <property type="match status" value="1"/>
</dbReference>
<dbReference type="SUPFAM" id="SSF50193">
    <property type="entry name" value="Ribosomal protein L14"/>
    <property type="match status" value="1"/>
</dbReference>
<dbReference type="PROSITE" id="PS00049">
    <property type="entry name" value="RIBOSOMAL_L14"/>
    <property type="match status" value="1"/>
</dbReference>
<gene>
    <name evidence="1" type="primary">rplN</name>
    <name type="ordered locus">ZMO0526</name>
</gene>
<sequence>MIQMQTNLDVADNSGAKRVQCIKVLGGSKRRTATVGDVIVVSVKEAAPRGRVKKGDVHRAVIVRTAKDIHRADGSVIRFDGNAAVLINKTSGEPIGTRIFGPVVRELRARNHMKIISLAPEVL</sequence>
<evidence type="ECO:0000255" key="1">
    <source>
        <dbReference type="HAMAP-Rule" id="MF_01367"/>
    </source>
</evidence>
<evidence type="ECO:0000305" key="2"/>
<reference key="1">
    <citation type="journal article" date="2005" name="Nat. Biotechnol.">
        <title>The genome sequence of the ethanologenic bacterium Zymomonas mobilis ZM4.</title>
        <authorList>
            <person name="Seo J.-S."/>
            <person name="Chong H."/>
            <person name="Park H.S."/>
            <person name="Yoon K.-O."/>
            <person name="Jung C."/>
            <person name="Kim J.J."/>
            <person name="Hong J.H."/>
            <person name="Kim H."/>
            <person name="Kim J.-H."/>
            <person name="Kil J.-I."/>
            <person name="Park C.J."/>
            <person name="Oh H.-M."/>
            <person name="Lee J.-S."/>
            <person name="Jin S.-J."/>
            <person name="Um H.-W."/>
            <person name="Lee H.-J."/>
            <person name="Oh S.-J."/>
            <person name="Kim J.Y."/>
            <person name="Kang H.L."/>
            <person name="Lee S.Y."/>
            <person name="Lee K.J."/>
            <person name="Kang H.S."/>
        </authorList>
    </citation>
    <scope>NUCLEOTIDE SEQUENCE [LARGE SCALE GENOMIC DNA]</scope>
    <source>
        <strain>ATCC 31821 / ZM4 / CP4</strain>
    </source>
</reference>
<reference key="2">
    <citation type="journal article" date="2009" name="Nat. Biotechnol.">
        <title>Improved genome annotation for Zymomonas mobilis.</title>
        <authorList>
            <person name="Yang S."/>
            <person name="Pappas K.M."/>
            <person name="Hauser L.J."/>
            <person name="Land M.L."/>
            <person name="Chen G.L."/>
            <person name="Hurst G.B."/>
            <person name="Pan C."/>
            <person name="Kouvelis V.N."/>
            <person name="Typas M.A."/>
            <person name="Pelletier D.A."/>
            <person name="Klingeman D.M."/>
            <person name="Chang Y.J."/>
            <person name="Samatova N.F."/>
            <person name="Brown S.D."/>
        </authorList>
    </citation>
    <scope>SEQUENCE REVISION</scope>
</reference>
<protein>
    <recommendedName>
        <fullName evidence="1">Large ribosomal subunit protein uL14</fullName>
    </recommendedName>
    <alternativeName>
        <fullName evidence="2">50S ribosomal protein L14</fullName>
    </alternativeName>
</protein>
<name>RL14_ZYMMO</name>
<keyword id="KW-1185">Reference proteome</keyword>
<keyword id="KW-0687">Ribonucleoprotein</keyword>
<keyword id="KW-0689">Ribosomal protein</keyword>
<keyword id="KW-0694">RNA-binding</keyword>
<keyword id="KW-0699">rRNA-binding</keyword>
<proteinExistence type="inferred from homology"/>
<organism>
    <name type="scientific">Zymomonas mobilis subsp. mobilis (strain ATCC 31821 / ZM4 / CP4)</name>
    <dbReference type="NCBI Taxonomy" id="264203"/>
    <lineage>
        <taxon>Bacteria</taxon>
        <taxon>Pseudomonadati</taxon>
        <taxon>Pseudomonadota</taxon>
        <taxon>Alphaproteobacteria</taxon>
        <taxon>Sphingomonadales</taxon>
        <taxon>Zymomonadaceae</taxon>
        <taxon>Zymomonas</taxon>
    </lineage>
</organism>